<keyword id="KW-0808">Transferase</keyword>
<keyword id="KW-0819">tRNA processing</keyword>
<reference key="1">
    <citation type="submission" date="2007-05" db="EMBL/GenBank/DDBJ databases">
        <title>Complete sequence of chromosome of Psychrobacter sp. PRwf-1.</title>
        <authorList>
            <consortium name="US DOE Joint Genome Institute"/>
            <person name="Copeland A."/>
            <person name="Lucas S."/>
            <person name="Lapidus A."/>
            <person name="Barry K."/>
            <person name="Detter J.C."/>
            <person name="Glavina del Rio T."/>
            <person name="Hammon N."/>
            <person name="Israni S."/>
            <person name="Dalin E."/>
            <person name="Tice H."/>
            <person name="Pitluck S."/>
            <person name="Chain P."/>
            <person name="Malfatti S."/>
            <person name="Shin M."/>
            <person name="Vergez L."/>
            <person name="Schmutz J."/>
            <person name="Larimer F."/>
            <person name="Land M."/>
            <person name="Hauser L."/>
            <person name="Kyrpides N."/>
            <person name="Kim E."/>
            <person name="Tiedje J."/>
            <person name="Richardson P."/>
        </authorList>
    </citation>
    <scope>NUCLEOTIDE SEQUENCE [LARGE SCALE GENOMIC DNA]</scope>
    <source>
        <strain>PRwf-1</strain>
    </source>
</reference>
<organism>
    <name type="scientific">Psychrobacter sp. (strain PRwf-1)</name>
    <dbReference type="NCBI Taxonomy" id="349106"/>
    <lineage>
        <taxon>Bacteria</taxon>
        <taxon>Pseudomonadati</taxon>
        <taxon>Pseudomonadota</taxon>
        <taxon>Gammaproteobacteria</taxon>
        <taxon>Moraxellales</taxon>
        <taxon>Moraxellaceae</taxon>
        <taxon>Psychrobacter</taxon>
    </lineage>
</organism>
<name>CMOB_PSYWF</name>
<accession>A5WC55</accession>
<dbReference type="EC" id="2.5.1.-" evidence="1"/>
<dbReference type="EMBL" id="CP000713">
    <property type="protein sequence ID" value="ABQ93246.1"/>
    <property type="molecule type" value="Genomic_DNA"/>
</dbReference>
<dbReference type="SMR" id="A5WC55"/>
<dbReference type="STRING" id="349106.PsycPRwf_0291"/>
<dbReference type="KEGG" id="prw:PsycPRwf_0291"/>
<dbReference type="eggNOG" id="COG2227">
    <property type="taxonomic scope" value="Bacteria"/>
</dbReference>
<dbReference type="HOGENOM" id="CLU_052665_0_0_6"/>
<dbReference type="GO" id="GO:0016765">
    <property type="term" value="F:transferase activity, transferring alkyl or aryl (other than methyl) groups"/>
    <property type="evidence" value="ECO:0007669"/>
    <property type="project" value="UniProtKB-UniRule"/>
</dbReference>
<dbReference type="GO" id="GO:0002098">
    <property type="term" value="P:tRNA wobble uridine modification"/>
    <property type="evidence" value="ECO:0007669"/>
    <property type="project" value="InterPro"/>
</dbReference>
<dbReference type="CDD" id="cd02440">
    <property type="entry name" value="AdoMet_MTases"/>
    <property type="match status" value="1"/>
</dbReference>
<dbReference type="Gene3D" id="3.40.50.150">
    <property type="entry name" value="Vaccinia Virus protein VP39"/>
    <property type="match status" value="1"/>
</dbReference>
<dbReference type="HAMAP" id="MF_01590">
    <property type="entry name" value="tRNA_carboxymethyltr_CmoB"/>
    <property type="match status" value="1"/>
</dbReference>
<dbReference type="InterPro" id="IPR010017">
    <property type="entry name" value="CmoB"/>
</dbReference>
<dbReference type="InterPro" id="IPR027555">
    <property type="entry name" value="Mo5U34_MeTrfas-like"/>
</dbReference>
<dbReference type="InterPro" id="IPR029063">
    <property type="entry name" value="SAM-dependent_MTases_sf"/>
</dbReference>
<dbReference type="NCBIfam" id="NF011650">
    <property type="entry name" value="PRK15068.1"/>
    <property type="match status" value="1"/>
</dbReference>
<dbReference type="NCBIfam" id="TIGR00452">
    <property type="entry name" value="tRNA 5-methoxyuridine(34)/uridine 5-oxyacetic acid(34) synthase CmoB"/>
    <property type="match status" value="1"/>
</dbReference>
<dbReference type="Pfam" id="PF08003">
    <property type="entry name" value="Methyltransf_9"/>
    <property type="match status" value="1"/>
</dbReference>
<dbReference type="SUPFAM" id="SSF53335">
    <property type="entry name" value="S-adenosyl-L-methionine-dependent methyltransferases"/>
    <property type="match status" value="1"/>
</dbReference>
<proteinExistence type="inferred from homology"/>
<evidence type="ECO:0000255" key="1">
    <source>
        <dbReference type="HAMAP-Rule" id="MF_01590"/>
    </source>
</evidence>
<protein>
    <recommendedName>
        <fullName evidence="1">tRNA U34 carboxymethyltransferase</fullName>
        <ecNumber evidence="1">2.5.1.-</ecNumber>
    </recommendedName>
</protein>
<feature type="chain" id="PRO_1000073619" description="tRNA U34 carboxymethyltransferase">
    <location>
        <begin position="1"/>
        <end position="353"/>
    </location>
</feature>
<feature type="binding site" evidence="1">
    <location>
        <position position="101"/>
    </location>
    <ligand>
        <name>carboxy-S-adenosyl-L-methionine</name>
        <dbReference type="ChEBI" id="CHEBI:134278"/>
    </ligand>
</feature>
<feature type="binding site" evidence="1">
    <location>
        <position position="119"/>
    </location>
    <ligand>
        <name>carboxy-S-adenosyl-L-methionine</name>
        <dbReference type="ChEBI" id="CHEBI:134278"/>
    </ligand>
</feature>
<feature type="binding site" evidence="1">
    <location>
        <position position="124"/>
    </location>
    <ligand>
        <name>carboxy-S-adenosyl-L-methionine</name>
        <dbReference type="ChEBI" id="CHEBI:134278"/>
    </ligand>
</feature>
<feature type="binding site" evidence="1">
    <location>
        <position position="144"/>
    </location>
    <ligand>
        <name>carboxy-S-adenosyl-L-methionine</name>
        <dbReference type="ChEBI" id="CHEBI:134278"/>
    </ligand>
</feature>
<feature type="binding site" evidence="1">
    <location>
        <begin position="166"/>
        <end position="168"/>
    </location>
    <ligand>
        <name>carboxy-S-adenosyl-L-methionine</name>
        <dbReference type="ChEBI" id="CHEBI:134278"/>
    </ligand>
</feature>
<feature type="binding site" evidence="1">
    <location>
        <begin position="207"/>
        <end position="208"/>
    </location>
    <ligand>
        <name>carboxy-S-adenosyl-L-methionine</name>
        <dbReference type="ChEBI" id="CHEBI:134278"/>
    </ligand>
</feature>
<feature type="binding site" evidence="1">
    <location>
        <position position="227"/>
    </location>
    <ligand>
        <name>carboxy-S-adenosyl-L-methionine</name>
        <dbReference type="ChEBI" id="CHEBI:134278"/>
    </ligand>
</feature>
<feature type="binding site" evidence="1">
    <location>
        <position position="231"/>
    </location>
    <ligand>
        <name>carboxy-S-adenosyl-L-methionine</name>
        <dbReference type="ChEBI" id="CHEBI:134278"/>
    </ligand>
</feature>
<feature type="binding site" evidence="1">
    <location>
        <position position="346"/>
    </location>
    <ligand>
        <name>carboxy-S-adenosyl-L-methionine</name>
        <dbReference type="ChEBI" id="CHEBI:134278"/>
    </ligand>
</feature>
<sequence>MTNHTITTAERELYLALIQRAQYRPIATQWLANLPQWLSDVKDKRRYAHAPAYLSAVENLPQIKVKNVDLNSDILTIDADLTDGQSKQITALMKQLMPWRKGPFQIGSGDNKVFIDTEWHSDWKWNRIKPHLGTLQGRYVLDVGGGSGYHGWRMAGAGAKQVVIIDPSCLFYHQFMAIRHFVAGFDTDMDSDRTGVGYRTHYIPVGLEQLPSSSDQGNQLFDTVFCMGVLYHRQSPFEHLIQLKNQLINGGQLVLETLVIEGDANTVLVPHNRYAKMNNVYFIPSVAALTGWLEKVGFSEVKCVDIDITSIKEQRATDWMSYQSLKDFLDPNDPTKTVEGYPAPMRATLIATK</sequence>
<gene>
    <name evidence="1" type="primary">cmoB</name>
    <name type="ordered locus">PsycPRwf_0291</name>
</gene>
<comment type="function">
    <text evidence="1">Catalyzes carboxymethyl transfer from carboxy-S-adenosyl-L-methionine (Cx-SAM) to 5-hydroxyuridine (ho5U) to form 5-carboxymethoxyuridine (cmo5U) at position 34 in tRNAs.</text>
</comment>
<comment type="catalytic activity">
    <reaction evidence="1">
        <text>carboxy-S-adenosyl-L-methionine + 5-hydroxyuridine(34) in tRNA = 5-carboxymethoxyuridine(34) in tRNA + S-adenosyl-L-homocysteine + H(+)</text>
        <dbReference type="Rhea" id="RHEA:52848"/>
        <dbReference type="Rhea" id="RHEA-COMP:13381"/>
        <dbReference type="Rhea" id="RHEA-COMP:13383"/>
        <dbReference type="ChEBI" id="CHEBI:15378"/>
        <dbReference type="ChEBI" id="CHEBI:57856"/>
        <dbReference type="ChEBI" id="CHEBI:134278"/>
        <dbReference type="ChEBI" id="CHEBI:136877"/>
        <dbReference type="ChEBI" id="CHEBI:136879"/>
    </reaction>
</comment>
<comment type="subunit">
    <text evidence="1">Homotetramer.</text>
</comment>
<comment type="similarity">
    <text evidence="1">Belongs to the class I-like SAM-binding methyltransferase superfamily. CmoB family.</text>
</comment>